<reference key="1">
    <citation type="journal article" date="2006" name="BMC Dev. Biol.">
        <title>Cloning and characterization of mr-s, a novel SAM domain protein, predominantly expressed in retinal photoreceptor cells.</title>
        <authorList>
            <person name="Inoue T."/>
            <person name="Terada K."/>
            <person name="Furukawa A."/>
            <person name="Koike C."/>
            <person name="Tamaki Y."/>
            <person name="Araie M."/>
            <person name="Furukawa T."/>
        </authorList>
    </citation>
    <scope>NUCLEOTIDE SEQUENCE [MRNA]</scope>
    <scope>SUBCELLULAR LOCATION</scope>
    <scope>FUNCTION</scope>
    <scope>TISSUE SPECIFICITY</scope>
    <scope>DEVELOPMENTAL STAGE</scope>
    <scope>SELF-ASSOCIATION</scope>
    <source>
        <strain>ICR</strain>
        <tissue>Retina</tissue>
    </source>
</reference>
<reference key="2">
    <citation type="journal article" date="2005" name="Science">
        <title>The transcriptional landscape of the mammalian genome.</title>
        <authorList>
            <person name="Carninci P."/>
            <person name="Kasukawa T."/>
            <person name="Katayama S."/>
            <person name="Gough J."/>
            <person name="Frith M.C."/>
            <person name="Maeda N."/>
            <person name="Oyama R."/>
            <person name="Ravasi T."/>
            <person name="Lenhard B."/>
            <person name="Wells C."/>
            <person name="Kodzius R."/>
            <person name="Shimokawa K."/>
            <person name="Bajic V.B."/>
            <person name="Brenner S.E."/>
            <person name="Batalov S."/>
            <person name="Forrest A.R."/>
            <person name="Zavolan M."/>
            <person name="Davis M.J."/>
            <person name="Wilming L.G."/>
            <person name="Aidinis V."/>
            <person name="Allen J.E."/>
            <person name="Ambesi-Impiombato A."/>
            <person name="Apweiler R."/>
            <person name="Aturaliya R.N."/>
            <person name="Bailey T.L."/>
            <person name="Bansal M."/>
            <person name="Baxter L."/>
            <person name="Beisel K.W."/>
            <person name="Bersano T."/>
            <person name="Bono H."/>
            <person name="Chalk A.M."/>
            <person name="Chiu K.P."/>
            <person name="Choudhary V."/>
            <person name="Christoffels A."/>
            <person name="Clutterbuck D.R."/>
            <person name="Crowe M.L."/>
            <person name="Dalla E."/>
            <person name="Dalrymple B.P."/>
            <person name="de Bono B."/>
            <person name="Della Gatta G."/>
            <person name="di Bernardo D."/>
            <person name="Down T."/>
            <person name="Engstrom P."/>
            <person name="Fagiolini M."/>
            <person name="Faulkner G."/>
            <person name="Fletcher C.F."/>
            <person name="Fukushima T."/>
            <person name="Furuno M."/>
            <person name="Futaki S."/>
            <person name="Gariboldi M."/>
            <person name="Georgii-Hemming P."/>
            <person name="Gingeras T.R."/>
            <person name="Gojobori T."/>
            <person name="Green R.E."/>
            <person name="Gustincich S."/>
            <person name="Harbers M."/>
            <person name="Hayashi Y."/>
            <person name="Hensch T.K."/>
            <person name="Hirokawa N."/>
            <person name="Hill D."/>
            <person name="Huminiecki L."/>
            <person name="Iacono M."/>
            <person name="Ikeo K."/>
            <person name="Iwama A."/>
            <person name="Ishikawa T."/>
            <person name="Jakt M."/>
            <person name="Kanapin A."/>
            <person name="Katoh M."/>
            <person name="Kawasawa Y."/>
            <person name="Kelso J."/>
            <person name="Kitamura H."/>
            <person name="Kitano H."/>
            <person name="Kollias G."/>
            <person name="Krishnan S.P."/>
            <person name="Kruger A."/>
            <person name="Kummerfeld S.K."/>
            <person name="Kurochkin I.V."/>
            <person name="Lareau L.F."/>
            <person name="Lazarevic D."/>
            <person name="Lipovich L."/>
            <person name="Liu J."/>
            <person name="Liuni S."/>
            <person name="McWilliam S."/>
            <person name="Madan Babu M."/>
            <person name="Madera M."/>
            <person name="Marchionni L."/>
            <person name="Matsuda H."/>
            <person name="Matsuzawa S."/>
            <person name="Miki H."/>
            <person name="Mignone F."/>
            <person name="Miyake S."/>
            <person name="Morris K."/>
            <person name="Mottagui-Tabar S."/>
            <person name="Mulder N."/>
            <person name="Nakano N."/>
            <person name="Nakauchi H."/>
            <person name="Ng P."/>
            <person name="Nilsson R."/>
            <person name="Nishiguchi S."/>
            <person name="Nishikawa S."/>
            <person name="Nori F."/>
            <person name="Ohara O."/>
            <person name="Okazaki Y."/>
            <person name="Orlando V."/>
            <person name="Pang K.C."/>
            <person name="Pavan W.J."/>
            <person name="Pavesi G."/>
            <person name="Pesole G."/>
            <person name="Petrovsky N."/>
            <person name="Piazza S."/>
            <person name="Reed J."/>
            <person name="Reid J.F."/>
            <person name="Ring B.Z."/>
            <person name="Ringwald M."/>
            <person name="Rost B."/>
            <person name="Ruan Y."/>
            <person name="Salzberg S.L."/>
            <person name="Sandelin A."/>
            <person name="Schneider C."/>
            <person name="Schoenbach C."/>
            <person name="Sekiguchi K."/>
            <person name="Semple C.A."/>
            <person name="Seno S."/>
            <person name="Sessa L."/>
            <person name="Sheng Y."/>
            <person name="Shibata Y."/>
            <person name="Shimada H."/>
            <person name="Shimada K."/>
            <person name="Silva D."/>
            <person name="Sinclair B."/>
            <person name="Sperling S."/>
            <person name="Stupka E."/>
            <person name="Sugiura K."/>
            <person name="Sultana R."/>
            <person name="Takenaka Y."/>
            <person name="Taki K."/>
            <person name="Tammoja K."/>
            <person name="Tan S.L."/>
            <person name="Tang S."/>
            <person name="Taylor M.S."/>
            <person name="Tegner J."/>
            <person name="Teichmann S.A."/>
            <person name="Ueda H.R."/>
            <person name="van Nimwegen E."/>
            <person name="Verardo R."/>
            <person name="Wei C.L."/>
            <person name="Yagi K."/>
            <person name="Yamanishi H."/>
            <person name="Zabarovsky E."/>
            <person name="Zhu S."/>
            <person name="Zimmer A."/>
            <person name="Hide W."/>
            <person name="Bult C."/>
            <person name="Grimmond S.M."/>
            <person name="Teasdale R.D."/>
            <person name="Liu E.T."/>
            <person name="Brusic V."/>
            <person name="Quackenbush J."/>
            <person name="Wahlestedt C."/>
            <person name="Mattick J.S."/>
            <person name="Hume D.A."/>
            <person name="Kai C."/>
            <person name="Sasaki D."/>
            <person name="Tomaru Y."/>
            <person name="Fukuda S."/>
            <person name="Kanamori-Katayama M."/>
            <person name="Suzuki M."/>
            <person name="Aoki J."/>
            <person name="Arakawa T."/>
            <person name="Iida J."/>
            <person name="Imamura K."/>
            <person name="Itoh M."/>
            <person name="Kato T."/>
            <person name="Kawaji H."/>
            <person name="Kawagashira N."/>
            <person name="Kawashima T."/>
            <person name="Kojima M."/>
            <person name="Kondo S."/>
            <person name="Konno H."/>
            <person name="Nakano K."/>
            <person name="Ninomiya N."/>
            <person name="Nishio T."/>
            <person name="Okada M."/>
            <person name="Plessy C."/>
            <person name="Shibata K."/>
            <person name="Shiraki T."/>
            <person name="Suzuki S."/>
            <person name="Tagami M."/>
            <person name="Waki K."/>
            <person name="Watahiki A."/>
            <person name="Okamura-Oho Y."/>
            <person name="Suzuki H."/>
            <person name="Kawai J."/>
            <person name="Hayashizaki Y."/>
        </authorList>
    </citation>
    <scope>NUCLEOTIDE SEQUENCE [LARGE SCALE MRNA]</scope>
    <source>
        <strain>C57BL/6J</strain>
        <tissue>Liver</tissue>
    </source>
</reference>
<reference key="3">
    <citation type="journal article" date="2021" name="Sci. Rep.">
        <title>Functional analysis of Samd11, a retinal photoreceptor PRC1 component, in establishing rod photoreceptor identity.</title>
        <authorList>
            <person name="Kubo S."/>
            <person name="Yamamoto H."/>
            <person name="Kajimura N."/>
            <person name="Omori Y."/>
            <person name="Maeda Y."/>
            <person name="Chaya T."/>
            <person name="Furukawa T."/>
        </authorList>
    </citation>
    <scope>FUNCTION</scope>
    <scope>DISRUPTION PHENOTYPE</scope>
    <scope>IDENTIFICATION IN A PRC1-LIKE COMPLEX</scope>
    <scope>INTERACTION WITH SAMD7 AND PHC2</scope>
    <scope>TISSUE SPECIFICITY</scope>
</reference>
<sequence>MPEHPRHCDFQRGNVEIGLGPGGDLLGKRLSCPCITSHCSSEKKARSKDPQATSLLPELESTMAPEDHYHQLMSALSEASSFEETQRLYHLGIPSHDLLRVRQEVATATLRGPSGLEVHLPSSTADHRRKQGLVQRREGAVPAAATSFSEREMSQPPPLLSPQNAAHITMSSHLRPPFLGMPTAVCQTPGFSFLPSAQAEMLARQQELLRKQSLARLEMSELLRQKELGSVHRPLLPAPEVALHIPEGPDELQRRGSMLVLKHSSAPLLALPPQGPPGPGPPIPPKESARSRSEKGSLGVQPSQPKETTGAGLWAQEVSEEPSKDSDGEDPETAAAREGTSTPSQVPAGGTRAEGRGLLSGSTLPPPLPLGFPCGAVSPYFHTGTMGGLFTDEETTTLEDVNKWTVDDVCNFVGGLSGCGEYARVFGEQGIDGETLPLLTEEHLLNTMGLKLGPALKIRAQVAKRLGRVFYMASFPVALPLQPPSLQAPELSPGHQPLSPATTTSPYEGTHLPTGQASPKQENGSGTIALLSGAPDPSQLLQ</sequence>
<name>SAM11_MOUSE</name>
<proteinExistence type="evidence at protein level"/>
<feature type="chain" id="PRO_0000279501" description="Sterile alpha motif domain-containing protein 11">
    <location>
        <begin position="1"/>
        <end position="542"/>
    </location>
</feature>
<feature type="domain" description="SAM" evidence="2">
    <location>
        <begin position="404"/>
        <end position="469"/>
    </location>
</feature>
<feature type="region of interest" description="Disordered" evidence="3">
    <location>
        <begin position="268"/>
        <end position="364"/>
    </location>
</feature>
<feature type="region of interest" description="Disordered" evidence="3">
    <location>
        <begin position="486"/>
        <end position="542"/>
    </location>
</feature>
<feature type="compositionally biased region" description="Pro residues" evidence="3">
    <location>
        <begin position="273"/>
        <end position="285"/>
    </location>
</feature>
<feature type="compositionally biased region" description="Polar residues" evidence="3">
    <location>
        <begin position="499"/>
        <end position="526"/>
    </location>
</feature>
<feature type="modified residue" description="Phosphothreonine" evidence="1">
    <location>
        <position position="342"/>
    </location>
</feature>
<feature type="modified residue" description="Phosphoserine" evidence="1">
    <location>
        <position position="499"/>
    </location>
</feature>
<feature type="sequence conflict" description="In Ref. 2; BAE36160." evidence="6" ref="2">
    <original>E</original>
    <variation>Q</variation>
    <location>
        <position position="16"/>
    </location>
</feature>
<organism>
    <name type="scientific">Mus musculus</name>
    <name type="common">Mouse</name>
    <dbReference type="NCBI Taxonomy" id="10090"/>
    <lineage>
        <taxon>Eukaryota</taxon>
        <taxon>Metazoa</taxon>
        <taxon>Chordata</taxon>
        <taxon>Craniata</taxon>
        <taxon>Vertebrata</taxon>
        <taxon>Euteleostomi</taxon>
        <taxon>Mammalia</taxon>
        <taxon>Eutheria</taxon>
        <taxon>Euarchontoglires</taxon>
        <taxon>Glires</taxon>
        <taxon>Rodentia</taxon>
        <taxon>Myomorpha</taxon>
        <taxon>Muroidea</taxon>
        <taxon>Muridae</taxon>
        <taxon>Murinae</taxon>
        <taxon>Mus</taxon>
        <taxon>Mus</taxon>
    </lineage>
</organism>
<dbReference type="EMBL" id="AY458844">
    <property type="protein sequence ID" value="AAS67287.1"/>
    <property type="molecule type" value="mRNA"/>
</dbReference>
<dbReference type="EMBL" id="AK161035">
    <property type="protein sequence ID" value="BAE36160.1"/>
    <property type="molecule type" value="mRNA"/>
</dbReference>
<dbReference type="CCDS" id="CCDS89876.1"/>
<dbReference type="RefSeq" id="NP_001342638.1">
    <property type="nucleotide sequence ID" value="NM_001355709.1"/>
</dbReference>
<dbReference type="RefSeq" id="XP_006538903.1">
    <property type="nucleotide sequence ID" value="XM_006538840.5"/>
</dbReference>
<dbReference type="RefSeq" id="XP_006538904.1">
    <property type="nucleotide sequence ID" value="XM_006538841.3"/>
</dbReference>
<dbReference type="RefSeq" id="XP_006538905.1">
    <property type="nucleotide sequence ID" value="XM_006538842.4"/>
</dbReference>
<dbReference type="SMR" id="Q1RNF8"/>
<dbReference type="BioGRID" id="231071">
    <property type="interactions" value="1"/>
</dbReference>
<dbReference type="FunCoup" id="Q1RNF8">
    <property type="interactions" value="1070"/>
</dbReference>
<dbReference type="STRING" id="10090.ENSMUSP00000136611"/>
<dbReference type="iPTMnet" id="Q1RNF8"/>
<dbReference type="PhosphoSitePlus" id="Q1RNF8"/>
<dbReference type="PaxDb" id="10090-ENSMUSP00000136611"/>
<dbReference type="ProteomicsDB" id="256695"/>
<dbReference type="Antibodypedia" id="56168">
    <property type="antibodies" value="12 antibodies from 8 providers"/>
</dbReference>
<dbReference type="Ensembl" id="ENSMUST00000217934.2">
    <property type="protein sequence ID" value="ENSMUSP00000151756.2"/>
    <property type="gene ID" value="ENSMUSG00000096351.3"/>
</dbReference>
<dbReference type="Ensembl" id="ENSMUST00000218788.2">
    <property type="protein sequence ID" value="ENSMUSP00000151442.2"/>
    <property type="gene ID" value="ENSMUSG00000096351.3"/>
</dbReference>
<dbReference type="GeneID" id="231004"/>
<dbReference type="UCSC" id="uc029vbk.1">
    <property type="organism name" value="mouse"/>
</dbReference>
<dbReference type="AGR" id="MGI:2446220"/>
<dbReference type="CTD" id="148398"/>
<dbReference type="MGI" id="MGI:2446220">
    <property type="gene designation" value="Samd11"/>
</dbReference>
<dbReference type="VEuPathDB" id="HostDB:ENSMUSG00000096351"/>
<dbReference type="eggNOG" id="KOG4333">
    <property type="taxonomic scope" value="Eukaryota"/>
</dbReference>
<dbReference type="GeneTree" id="ENSGT00940000160830"/>
<dbReference type="InParanoid" id="Q1RNF8"/>
<dbReference type="BioGRID-ORCS" id="231004">
    <property type="hits" value="1 hit in 76 CRISPR screens"/>
</dbReference>
<dbReference type="ChiTaRS" id="Samd11">
    <property type="organism name" value="mouse"/>
</dbReference>
<dbReference type="PRO" id="PR:Q1RNF8"/>
<dbReference type="Proteomes" id="UP000000589">
    <property type="component" value="Chromosome 4"/>
</dbReference>
<dbReference type="RNAct" id="Q1RNF8">
    <property type="molecule type" value="protein"/>
</dbReference>
<dbReference type="Bgee" id="ENSMUSG00000096351">
    <property type="expression patterns" value="Expressed in retinal neural layer and 65 other cell types or tissues"/>
</dbReference>
<dbReference type="ExpressionAtlas" id="Q1RNF8">
    <property type="expression patterns" value="baseline and differential"/>
</dbReference>
<dbReference type="GO" id="GO:0005634">
    <property type="term" value="C:nucleus"/>
    <property type="evidence" value="ECO:0000314"/>
    <property type="project" value="MGI"/>
</dbReference>
<dbReference type="GO" id="GO:0035102">
    <property type="term" value="C:PRC1 complex"/>
    <property type="evidence" value="ECO:0000314"/>
    <property type="project" value="UniProtKB"/>
</dbReference>
<dbReference type="GO" id="GO:0001227">
    <property type="term" value="F:DNA-binding transcription repressor activity, RNA polymerase II-specific"/>
    <property type="evidence" value="ECO:0000315"/>
    <property type="project" value="UniProtKB"/>
</dbReference>
<dbReference type="GO" id="GO:0042802">
    <property type="term" value="F:identical protein binding"/>
    <property type="evidence" value="ECO:0000353"/>
    <property type="project" value="MGI"/>
</dbReference>
<dbReference type="GO" id="GO:0042731">
    <property type="term" value="F:PH domain binding"/>
    <property type="evidence" value="ECO:0000314"/>
    <property type="project" value="MGI"/>
</dbReference>
<dbReference type="GO" id="GO:0032093">
    <property type="term" value="F:SAM domain binding"/>
    <property type="evidence" value="ECO:0000314"/>
    <property type="project" value="MGI"/>
</dbReference>
<dbReference type="GO" id="GO:0000122">
    <property type="term" value="P:negative regulation of transcription by RNA polymerase II"/>
    <property type="evidence" value="ECO:0000314"/>
    <property type="project" value="MGI"/>
</dbReference>
<dbReference type="GO" id="GO:0046548">
    <property type="term" value="P:retinal rod cell development"/>
    <property type="evidence" value="ECO:0000315"/>
    <property type="project" value="UniProtKB"/>
</dbReference>
<dbReference type="CDD" id="cd09579">
    <property type="entry name" value="SAM_Samd7_11"/>
    <property type="match status" value="1"/>
</dbReference>
<dbReference type="Gene3D" id="1.10.150.50">
    <property type="entry name" value="Transcription Factor, Ets-1"/>
    <property type="match status" value="1"/>
</dbReference>
<dbReference type="InterPro" id="IPR050548">
    <property type="entry name" value="PcG_chromatin_remod_factors"/>
</dbReference>
<dbReference type="InterPro" id="IPR001660">
    <property type="entry name" value="SAM"/>
</dbReference>
<dbReference type="InterPro" id="IPR013761">
    <property type="entry name" value="SAM/pointed_sf"/>
</dbReference>
<dbReference type="PANTHER" id="PTHR12247">
    <property type="entry name" value="POLYCOMB GROUP PROTEIN"/>
    <property type="match status" value="1"/>
</dbReference>
<dbReference type="PANTHER" id="PTHR12247:SF67">
    <property type="entry name" value="STERILE ALPHA MOTIF DOMAIN-CONTAINING PROTEIN 11"/>
    <property type="match status" value="1"/>
</dbReference>
<dbReference type="Pfam" id="PF00536">
    <property type="entry name" value="SAM_1"/>
    <property type="match status" value="1"/>
</dbReference>
<dbReference type="SMART" id="SM00454">
    <property type="entry name" value="SAM"/>
    <property type="match status" value="1"/>
</dbReference>
<dbReference type="SUPFAM" id="SSF47769">
    <property type="entry name" value="SAM/Pointed domain"/>
    <property type="match status" value="1"/>
</dbReference>
<dbReference type="PROSITE" id="PS50105">
    <property type="entry name" value="SAM_DOMAIN"/>
    <property type="match status" value="1"/>
</dbReference>
<comment type="function">
    <text evidence="4 5">Component of a Polycomb group (PcG) multiprotein PRC1-like complex, essential for establishing rod photoreceptor cell identity and function by silencing nonrod gene expression in developing rod photoreceptor cells.</text>
</comment>
<comment type="subunit">
    <text evidence="4 5">Self-associates (PubMed:16539743). Component of a Polycomb group (PcG) multiprotein PRC1-like complex (PubMed:33603070). Interacts with SAMD7 and PHC2 (PubMed:33603070).</text>
</comment>
<comment type="subcellular location">
    <subcellularLocation>
        <location evidence="4">Nucleus</location>
    </subcellularLocation>
</comment>
<comment type="tissue specificity">
    <text evidence="4 5">Expressed in the outer nuclear layer of rod photoreceptors in the retina (at protein level) (PubMed:33603070). Predominantly expressed in retinal photoreceptors and pineal gland.</text>
</comment>
<comment type="developmental stage">
    <text evidence="4">Expressed from 18 dpc in the outer aspect of neuroblastic layer (NBL).</text>
</comment>
<comment type="disruption phenotype">
    <text evidence="5">Double Samd7 and Samd11 knockout mice show shortened and disorganized photoreceptor outer segments, reduced light sensitivity and delayed signal transmission from rods to rod bipolar cells at low flash luminescence (PubMed:33603070). Show an up-regulation and down-regulation of cone and rod genes, respectively in the retina (PubMed:33603070).</text>
</comment>
<gene>
    <name type="primary">Samd11</name>
</gene>
<evidence type="ECO:0000250" key="1">
    <source>
        <dbReference type="UniProtKB" id="Q96NU1"/>
    </source>
</evidence>
<evidence type="ECO:0000255" key="2">
    <source>
        <dbReference type="PROSITE-ProRule" id="PRU00184"/>
    </source>
</evidence>
<evidence type="ECO:0000256" key="3">
    <source>
        <dbReference type="SAM" id="MobiDB-lite"/>
    </source>
</evidence>
<evidence type="ECO:0000269" key="4">
    <source>
    </source>
</evidence>
<evidence type="ECO:0000269" key="5">
    <source>
    </source>
</evidence>
<evidence type="ECO:0000305" key="6"/>
<keyword id="KW-0539">Nucleus</keyword>
<keyword id="KW-0597">Phosphoprotein</keyword>
<keyword id="KW-1185">Reference proteome</keyword>
<keyword id="KW-0678">Repressor</keyword>
<keyword id="KW-0804">Transcription</keyword>
<keyword id="KW-0805">Transcription regulation</keyword>
<accession>Q1RNF8</accession>
<accession>Q3TU11</accession>
<protein>
    <recommendedName>
        <fullName>Sterile alpha motif domain-containing protein 11</fullName>
        <shortName>SAM domain-containing protein 11</shortName>
    </recommendedName>
    <alternativeName>
        <fullName>Major retinal SAM domain-containing protein</fullName>
        <shortName>Mr-s</shortName>
    </alternativeName>
</protein>